<protein>
    <recommendedName>
        <fullName evidence="1">Ion-translocating oxidoreductase complex subunit D</fullName>
        <ecNumber evidence="1">7.-.-.-</ecNumber>
    </recommendedName>
    <alternativeName>
        <fullName evidence="1">Rnf electron transport complex subunit D</fullName>
    </alternativeName>
</protein>
<reference key="1">
    <citation type="submission" date="2007-07" db="EMBL/GenBank/DDBJ databases">
        <title>Complete sequence of chromosome of Shewanella baltica OS185.</title>
        <authorList>
            <consortium name="US DOE Joint Genome Institute"/>
            <person name="Copeland A."/>
            <person name="Lucas S."/>
            <person name="Lapidus A."/>
            <person name="Barry K."/>
            <person name="Glavina del Rio T."/>
            <person name="Dalin E."/>
            <person name="Tice H."/>
            <person name="Pitluck S."/>
            <person name="Sims D."/>
            <person name="Brettin T."/>
            <person name="Bruce D."/>
            <person name="Detter J.C."/>
            <person name="Han C."/>
            <person name="Schmutz J."/>
            <person name="Larimer F."/>
            <person name="Land M."/>
            <person name="Hauser L."/>
            <person name="Kyrpides N."/>
            <person name="Mikhailova N."/>
            <person name="Brettar I."/>
            <person name="Rodrigues J."/>
            <person name="Konstantinidis K."/>
            <person name="Tiedje J."/>
            <person name="Richardson P."/>
        </authorList>
    </citation>
    <scope>NUCLEOTIDE SEQUENCE [LARGE SCALE GENOMIC DNA]</scope>
    <source>
        <strain>OS185</strain>
    </source>
</reference>
<gene>
    <name evidence="1" type="primary">rnfD</name>
    <name type="ordered locus">Shew185_2062</name>
</gene>
<evidence type="ECO:0000255" key="1">
    <source>
        <dbReference type="HAMAP-Rule" id="MF_00462"/>
    </source>
</evidence>
<organism>
    <name type="scientific">Shewanella baltica (strain OS185)</name>
    <dbReference type="NCBI Taxonomy" id="402882"/>
    <lineage>
        <taxon>Bacteria</taxon>
        <taxon>Pseudomonadati</taxon>
        <taxon>Pseudomonadota</taxon>
        <taxon>Gammaproteobacteria</taxon>
        <taxon>Alteromonadales</taxon>
        <taxon>Shewanellaceae</taxon>
        <taxon>Shewanella</taxon>
    </lineage>
</organism>
<accession>A6WN15</accession>
<comment type="function">
    <text evidence="1">Part of a membrane-bound complex that couples electron transfer with translocation of ions across the membrane.</text>
</comment>
<comment type="cofactor">
    <cofactor evidence="1">
        <name>FMN</name>
        <dbReference type="ChEBI" id="CHEBI:58210"/>
    </cofactor>
</comment>
<comment type="subunit">
    <text evidence="1">The complex is composed of six subunits: RnfA, RnfB, RnfC, RnfD, RnfE and RnfG.</text>
</comment>
<comment type="subcellular location">
    <subcellularLocation>
        <location evidence="1">Cell inner membrane</location>
        <topology evidence="1">Multi-pass membrane protein</topology>
    </subcellularLocation>
</comment>
<comment type="similarity">
    <text evidence="1">Belongs to the NqrB/RnfD family.</text>
</comment>
<feature type="chain" id="PRO_1000013627" description="Ion-translocating oxidoreductase complex subunit D">
    <location>
        <begin position="1"/>
        <end position="349"/>
    </location>
</feature>
<feature type="transmembrane region" description="Helical" evidence="1">
    <location>
        <begin position="20"/>
        <end position="42"/>
    </location>
</feature>
<feature type="transmembrane region" description="Helical" evidence="1">
    <location>
        <begin position="77"/>
        <end position="99"/>
    </location>
</feature>
<feature type="transmembrane region" description="Helical" evidence="1">
    <location>
        <begin position="124"/>
        <end position="144"/>
    </location>
</feature>
<feature type="transmembrane region" description="Helical" evidence="1">
    <location>
        <begin position="212"/>
        <end position="232"/>
    </location>
</feature>
<feature type="transmembrane region" description="Helical" evidence="1">
    <location>
        <begin position="239"/>
        <end position="259"/>
    </location>
</feature>
<feature type="transmembrane region" description="Helical" evidence="1">
    <location>
        <begin position="265"/>
        <end position="285"/>
    </location>
</feature>
<feature type="transmembrane region" description="Helical" evidence="1">
    <location>
        <begin position="291"/>
        <end position="311"/>
    </location>
</feature>
<feature type="transmembrane region" description="Helical" evidence="1">
    <location>
        <begin position="315"/>
        <end position="335"/>
    </location>
</feature>
<feature type="modified residue" description="FMN phosphoryl threonine" evidence="1">
    <location>
        <position position="185"/>
    </location>
</feature>
<sequence>MAFKIASSPHVTRNLHTSTVMQRVILCLLPGLVVQCAFFGWGTLVQVLLAILVALSCEAAVMKLRNRNIKASLSDNSAMLTAILIGVAIPPLAPWWMIVMGTAFAIVIVKHLYGGLGHNLFNPAMAAYVLLLVSFPVQMTTWIAPSTVALHSPSLVESLQLIFNIGAHVNMEQFRLGIDGMTMATPLDTLKTDLSMGLTTTESLTKAIFDGSTGVGWFWVNLAYLAGGLVLLKLKAIRWHISTGVLLGLFVASSIGFLLSPDTQASPLMHLFSGATMLAAFFIATDPVTAATSPRGRIIFGALIGVLVYIIRTKGGYPDAFAFAVLLANLCAPFIDYYVRPRTYGHSTS</sequence>
<proteinExistence type="inferred from homology"/>
<keyword id="KW-0997">Cell inner membrane</keyword>
<keyword id="KW-1003">Cell membrane</keyword>
<keyword id="KW-0249">Electron transport</keyword>
<keyword id="KW-0285">Flavoprotein</keyword>
<keyword id="KW-0288">FMN</keyword>
<keyword id="KW-0472">Membrane</keyword>
<keyword id="KW-0597">Phosphoprotein</keyword>
<keyword id="KW-1278">Translocase</keyword>
<keyword id="KW-0812">Transmembrane</keyword>
<keyword id="KW-1133">Transmembrane helix</keyword>
<keyword id="KW-0813">Transport</keyword>
<name>RNFD_SHEB8</name>
<dbReference type="EC" id="7.-.-.-" evidence="1"/>
<dbReference type="EMBL" id="CP000753">
    <property type="protein sequence ID" value="ABS08204.1"/>
    <property type="molecule type" value="Genomic_DNA"/>
</dbReference>
<dbReference type="RefSeq" id="WP_012089128.1">
    <property type="nucleotide sequence ID" value="NC_009665.1"/>
</dbReference>
<dbReference type="SMR" id="A6WN15"/>
<dbReference type="KEGG" id="sbm:Shew185_2062"/>
<dbReference type="HOGENOM" id="CLU_042020_0_0_6"/>
<dbReference type="GO" id="GO:0005886">
    <property type="term" value="C:plasma membrane"/>
    <property type="evidence" value="ECO:0007669"/>
    <property type="project" value="UniProtKB-SubCell"/>
</dbReference>
<dbReference type="GO" id="GO:0022900">
    <property type="term" value="P:electron transport chain"/>
    <property type="evidence" value="ECO:0007669"/>
    <property type="project" value="UniProtKB-UniRule"/>
</dbReference>
<dbReference type="GO" id="GO:0055085">
    <property type="term" value="P:transmembrane transport"/>
    <property type="evidence" value="ECO:0007669"/>
    <property type="project" value="InterPro"/>
</dbReference>
<dbReference type="HAMAP" id="MF_00462">
    <property type="entry name" value="RsxD_RnfD"/>
    <property type="match status" value="1"/>
</dbReference>
<dbReference type="InterPro" id="IPR004338">
    <property type="entry name" value="NqrB/RnfD"/>
</dbReference>
<dbReference type="InterPro" id="IPR011303">
    <property type="entry name" value="RnfD_bac"/>
</dbReference>
<dbReference type="NCBIfam" id="NF002011">
    <property type="entry name" value="PRK00816.1"/>
    <property type="match status" value="1"/>
</dbReference>
<dbReference type="NCBIfam" id="TIGR01946">
    <property type="entry name" value="rnfD"/>
    <property type="match status" value="1"/>
</dbReference>
<dbReference type="PANTHER" id="PTHR30578">
    <property type="entry name" value="ELECTRON TRANSPORT COMPLEX PROTEIN RNFD"/>
    <property type="match status" value="1"/>
</dbReference>
<dbReference type="PANTHER" id="PTHR30578:SF0">
    <property type="entry name" value="ION-TRANSLOCATING OXIDOREDUCTASE COMPLEX SUBUNIT D"/>
    <property type="match status" value="1"/>
</dbReference>
<dbReference type="Pfam" id="PF03116">
    <property type="entry name" value="NQR2_RnfD_RnfE"/>
    <property type="match status" value="1"/>
</dbReference>